<keyword id="KW-0007">Acetylation</keyword>
<keyword id="KW-0963">Cytoplasm</keyword>
<keyword id="KW-1017">Isopeptide bond</keyword>
<keyword id="KW-0539">Nucleus</keyword>
<keyword id="KW-0597">Phosphoprotein</keyword>
<keyword id="KW-1185">Reference proteome</keyword>
<keyword id="KW-0687">Ribonucleoprotein</keyword>
<keyword id="KW-0689">Ribosomal protein</keyword>
<keyword id="KW-0694">RNA-binding</keyword>
<keyword id="KW-0699">rRNA-binding</keyword>
<keyword id="KW-0832">Ubl conjugation</keyword>
<comment type="function">
    <text evidence="1">Component of the ribosome, a large ribonucleoprotein complex responsible for the synthesis of proteins in the cell. The small ribosomal subunit (SSU) binds messenger RNAs (mRNAs) and translates the encoded message by selecting cognate aminoacyl-transfer RNA (tRNA) molecules. The large subunit (LSU) contains the ribosomal catalytic site termed the peptidyl transferase center (PTC), which catalyzes the formation of peptide bonds, thereby polymerizing the amino acids delivered by tRNAs into a polypeptide chain. The nascent polypeptides leave the ribosome through a tunnel in the LSU and interact with protein factors that function in enzymatic processing, targeting, and the membrane insertion of nascent chains at the exit of the ribosomal tunnel. As part of the 5S RNP/5S ribonucleoprotein particle it is an essential component of the LSU, required for its formation and the maturation of rRNAs. It also couples ribosome biogenesis to p53/TP53 activation. As part of the 5S RNP it accumulates in the nucleoplasm and inhibits MDM2, when ribosome biogenesis is perturbed, mediating the stabilization and the activation of TP53.</text>
</comment>
<comment type="subunit">
    <text evidence="1">Component of the large ribosomal subunit (LSU). Part of the 5S RNP complex, which is a LSU subcomplex composed of the 5S RNA, RPL5 and RPL11 (By similarity). Component of a hexameric 5S RNP precursor complex, composed of 5S RNA, RRS1, RPF2/BXDC1, RPL5, RPL11 and HEATR3; this complex acts as a precursor for ribosome assembly (By similarity). Interacts with NVL in an ATP-dependent manner (By similarity). Interacts with RRP1B (By similarity). Interacts with IPO5, IPO7 and KPNB1; these interactions may be involved in RPL5 nuclear import for the assembly of ribosomal subunits (By similarity).</text>
</comment>
<comment type="subcellular location">
    <subcellularLocation>
        <location evidence="1">Cytoplasm</location>
    </subcellularLocation>
    <subcellularLocation>
        <location evidence="1">Nucleus</location>
        <location evidence="1">Nucleolus</location>
    </subcellularLocation>
    <text evidence="1">Although RP5 is functional within the cytoplasm, the assembly of ribosomal subunits occurs in the nucleus. RPL5 nuclear import is mediated by IPO5/RanBP5, IPO7/RanBP7, KPNB1/importin-beta or TPNO1/Trn.</text>
</comment>
<comment type="similarity">
    <text evidence="4">Belongs to the universal ribosomal protein uL18 family.</text>
</comment>
<comment type="sequence caution" evidence="4">
    <conflict type="frameshift">
        <sequence resource="EMBL-CDS" id="AAX46329"/>
    </conflict>
</comment>
<evidence type="ECO:0000250" key="1">
    <source>
        <dbReference type="UniProtKB" id="P46777"/>
    </source>
</evidence>
<evidence type="ECO:0000250" key="2">
    <source>
        <dbReference type="UniProtKB" id="P47962"/>
    </source>
</evidence>
<evidence type="ECO:0000256" key="3">
    <source>
        <dbReference type="SAM" id="MobiDB-lite"/>
    </source>
</evidence>
<evidence type="ECO:0000305" key="4"/>
<dbReference type="EMBL" id="BT021482">
    <property type="protein sequence ID" value="AAX46329.1"/>
    <property type="status" value="ALT_FRAME"/>
    <property type="molecule type" value="mRNA"/>
</dbReference>
<dbReference type="EMBL" id="BC105198">
    <property type="protein sequence ID" value="AAI05199.1"/>
    <property type="molecule type" value="mRNA"/>
</dbReference>
<dbReference type="RefSeq" id="NP_001030383.1">
    <property type="nucleotide sequence ID" value="NM_001035306.2"/>
</dbReference>
<dbReference type="SMR" id="Q58DW5"/>
<dbReference type="FunCoup" id="Q58DW5">
    <property type="interactions" value="3530"/>
</dbReference>
<dbReference type="STRING" id="9913.ENSBTAP00000055696"/>
<dbReference type="PaxDb" id="9913-ENSBTAP00000002626"/>
<dbReference type="PeptideAtlas" id="Q58DW5"/>
<dbReference type="GeneID" id="515238"/>
<dbReference type="KEGG" id="bta:515238"/>
<dbReference type="CTD" id="6125"/>
<dbReference type="VEuPathDB" id="HostDB:ENSBTAG00000002026"/>
<dbReference type="eggNOG" id="KOG0875">
    <property type="taxonomic scope" value="Eukaryota"/>
</dbReference>
<dbReference type="HOGENOM" id="CLU_056222_1_0_1"/>
<dbReference type="InParanoid" id="Q58DW5"/>
<dbReference type="OMA" id="CQIASAH"/>
<dbReference type="OrthoDB" id="1618453at2759"/>
<dbReference type="TreeFam" id="TF300044"/>
<dbReference type="Reactome" id="R-BTA-156827">
    <property type="pathway name" value="L13a-mediated translational silencing of Ceruloplasmin expression"/>
</dbReference>
<dbReference type="Reactome" id="R-BTA-1799339">
    <property type="pathway name" value="SRP-dependent cotranslational protein targeting to membrane"/>
</dbReference>
<dbReference type="Reactome" id="R-BTA-6791226">
    <property type="pathway name" value="Major pathway of rRNA processing in the nucleolus and cytosol"/>
</dbReference>
<dbReference type="Reactome" id="R-BTA-72689">
    <property type="pathway name" value="Formation of a pool of free 40S subunits"/>
</dbReference>
<dbReference type="Reactome" id="R-BTA-72706">
    <property type="pathway name" value="GTP hydrolysis and joining of the 60S ribosomal subunit"/>
</dbReference>
<dbReference type="Reactome" id="R-BTA-975956">
    <property type="pathway name" value="Nonsense Mediated Decay (NMD) independent of the Exon Junction Complex (EJC)"/>
</dbReference>
<dbReference type="Reactome" id="R-BTA-975957">
    <property type="pathway name" value="Nonsense Mediated Decay (NMD) enhanced by the Exon Junction Complex (EJC)"/>
</dbReference>
<dbReference type="Proteomes" id="UP000009136">
    <property type="component" value="Chromosome 3"/>
</dbReference>
<dbReference type="Bgee" id="ENSBTAG00000002026">
    <property type="expression patterns" value="Expressed in adenohypophysis and 104 other cell types or tissues"/>
</dbReference>
<dbReference type="GO" id="GO:0005737">
    <property type="term" value="C:cytoplasm"/>
    <property type="evidence" value="ECO:0000250"/>
    <property type="project" value="UniProtKB"/>
</dbReference>
<dbReference type="GO" id="GO:0022625">
    <property type="term" value="C:cytosolic large ribosomal subunit"/>
    <property type="evidence" value="ECO:0000318"/>
    <property type="project" value="GO_Central"/>
</dbReference>
<dbReference type="GO" id="GO:0005730">
    <property type="term" value="C:nucleolus"/>
    <property type="evidence" value="ECO:0000250"/>
    <property type="project" value="UniProtKB"/>
</dbReference>
<dbReference type="GO" id="GO:0008097">
    <property type="term" value="F:5S rRNA binding"/>
    <property type="evidence" value="ECO:0000318"/>
    <property type="project" value="GO_Central"/>
</dbReference>
<dbReference type="GO" id="GO:0003735">
    <property type="term" value="F:structural constituent of ribosome"/>
    <property type="evidence" value="ECO:0000318"/>
    <property type="project" value="GO_Central"/>
</dbReference>
<dbReference type="GO" id="GO:0000027">
    <property type="term" value="P:ribosomal large subunit assembly"/>
    <property type="evidence" value="ECO:0000318"/>
    <property type="project" value="GO_Central"/>
</dbReference>
<dbReference type="GO" id="GO:0006412">
    <property type="term" value="P:translation"/>
    <property type="evidence" value="ECO:0007669"/>
    <property type="project" value="InterPro"/>
</dbReference>
<dbReference type="CDD" id="cd00432">
    <property type="entry name" value="Ribosomal_L18_L5e"/>
    <property type="match status" value="1"/>
</dbReference>
<dbReference type="FunFam" id="3.30.420.100:FF:000011">
    <property type="entry name" value="60S ribosomal protein L5"/>
    <property type="match status" value="1"/>
</dbReference>
<dbReference type="FunFam" id="3.30.420.100:FF:000013">
    <property type="entry name" value="60S ribosomal protein L5 isoform X2"/>
    <property type="match status" value="1"/>
</dbReference>
<dbReference type="Gene3D" id="3.30.420.100">
    <property type="match status" value="1"/>
</dbReference>
<dbReference type="HAMAP" id="MF_01337_A">
    <property type="entry name" value="Ribosomal_uL18_A"/>
    <property type="match status" value="1"/>
</dbReference>
<dbReference type="InterPro" id="IPR005485">
    <property type="entry name" value="Rbsml_uL18_euk"/>
</dbReference>
<dbReference type="InterPro" id="IPR025607">
    <property type="entry name" value="Ribosomal_uL18_C_euk"/>
</dbReference>
<dbReference type="PANTHER" id="PTHR23410:SF12">
    <property type="entry name" value="LARGE RIBOSOMAL SUBUNIT PROTEIN UL18"/>
    <property type="match status" value="1"/>
</dbReference>
<dbReference type="PANTHER" id="PTHR23410">
    <property type="entry name" value="RIBOSOMAL PROTEIN L5-RELATED"/>
    <property type="match status" value="1"/>
</dbReference>
<dbReference type="Pfam" id="PF14204">
    <property type="entry name" value="Ribosomal_L18_c"/>
    <property type="match status" value="1"/>
</dbReference>
<dbReference type="Pfam" id="PF17144">
    <property type="entry name" value="Ribosomal_L5e"/>
    <property type="match status" value="1"/>
</dbReference>
<dbReference type="PRINTS" id="PR00058">
    <property type="entry name" value="RIBOSOMALL5"/>
</dbReference>
<dbReference type="SUPFAM" id="SSF53137">
    <property type="entry name" value="Translational machinery components"/>
    <property type="match status" value="1"/>
</dbReference>
<protein>
    <recommendedName>
        <fullName evidence="4">Large ribosomal subunit protein uL18</fullName>
    </recommendedName>
    <alternativeName>
        <fullName>60S ribosomal protein L5</fullName>
    </alternativeName>
</protein>
<feature type="initiator methionine" description="Removed" evidence="1">
    <location>
        <position position="1"/>
    </location>
</feature>
<feature type="chain" id="PRO_0000236216" description="Large ribosomal subunit protein uL18">
    <location>
        <begin position="2"/>
        <end position="297"/>
    </location>
</feature>
<feature type="region of interest" description="Disordered" evidence="3">
    <location>
        <begin position="252"/>
        <end position="297"/>
    </location>
</feature>
<feature type="compositionally biased region" description="Basic residues" evidence="3">
    <location>
        <begin position="258"/>
        <end position="268"/>
    </location>
</feature>
<feature type="modified residue" description="N-acetylglycine" evidence="1">
    <location>
        <position position="2"/>
    </location>
</feature>
<feature type="modified residue" description="N6-acetyllysine" evidence="1">
    <location>
        <position position="5"/>
    </location>
</feature>
<feature type="modified residue" description="N6-acetyllysine" evidence="1">
    <location>
        <position position="48"/>
    </location>
</feature>
<feature type="modified residue" description="Phosphoserine" evidence="1">
    <location>
        <position position="185"/>
    </location>
</feature>
<feature type="modified residue" description="N6-acetyllysine; alternate" evidence="2">
    <location>
        <position position="220"/>
    </location>
</feature>
<feature type="modified residue" description="Phosphothreonine" evidence="1">
    <location>
        <position position="232"/>
    </location>
</feature>
<feature type="modified residue" description="Phosphoserine" evidence="1">
    <location>
        <position position="272"/>
    </location>
</feature>
<feature type="cross-link" description="Glycyl lysine isopeptide (Lys-Gly) (interchain with G-Cter in SUMO1); alternate" evidence="1">
    <location>
        <position position="220"/>
    </location>
</feature>
<feature type="cross-link" description="Glycyl lysine isopeptide (Lys-Gly) (interchain with G-Cter in SUMO2); alternate" evidence="1">
    <location>
        <position position="220"/>
    </location>
</feature>
<feature type="sequence conflict" description="In Ref. 2; AAI05199." evidence="4" ref="2">
    <original>Y</original>
    <variation>N</variation>
    <location>
        <position position="49"/>
    </location>
</feature>
<reference key="1">
    <citation type="journal article" date="2005" name="BMC Genomics">
        <title>Characterization of 954 bovine full-CDS cDNA sequences.</title>
        <authorList>
            <person name="Harhay G.P."/>
            <person name="Sonstegard T.S."/>
            <person name="Keele J.W."/>
            <person name="Heaton M.P."/>
            <person name="Clawson M.L."/>
            <person name="Snelling W.M."/>
            <person name="Wiedmann R.T."/>
            <person name="Van Tassell C.P."/>
            <person name="Smith T.P.L."/>
        </authorList>
    </citation>
    <scope>NUCLEOTIDE SEQUENCE [LARGE SCALE MRNA]</scope>
</reference>
<reference key="2">
    <citation type="submission" date="2005-09" db="EMBL/GenBank/DDBJ databases">
        <authorList>
            <consortium name="NIH - Mammalian Gene Collection (MGC) project"/>
        </authorList>
    </citation>
    <scope>NUCLEOTIDE SEQUENCE [LARGE SCALE MRNA]</scope>
    <source>
        <strain>Hereford</strain>
        <tissue>Thymus</tissue>
    </source>
</reference>
<organism>
    <name type="scientific">Bos taurus</name>
    <name type="common">Bovine</name>
    <dbReference type="NCBI Taxonomy" id="9913"/>
    <lineage>
        <taxon>Eukaryota</taxon>
        <taxon>Metazoa</taxon>
        <taxon>Chordata</taxon>
        <taxon>Craniata</taxon>
        <taxon>Vertebrata</taxon>
        <taxon>Euteleostomi</taxon>
        <taxon>Mammalia</taxon>
        <taxon>Eutheria</taxon>
        <taxon>Laurasiatheria</taxon>
        <taxon>Artiodactyla</taxon>
        <taxon>Ruminantia</taxon>
        <taxon>Pecora</taxon>
        <taxon>Bovidae</taxon>
        <taxon>Bovinae</taxon>
        <taxon>Bos</taxon>
    </lineage>
</organism>
<accession>Q58DW5</accession>
<accession>Q3MHL0</accession>
<sequence length="297" mass="34345">MGFVKVVKNKAYFKRYQVKFRRRREGKTDYYARKRLVIQDKNKYNTPKYRMIVRVTNRDIICQIAYARIEGDMIVCAAYAHELPKYGVKVGLTNYAAAYCTGLLLARRLLNRFGMDKIYEGQVEVTGDEYNVESIDGQPGAFTCYLDAGLARTTTGNKVFGALKGAVDGGLSIPHSTKRFPGYDSESKEFSAEVHRKHIMGQNVADYMRYLIEEDEDAYKKQFSQYIKNNVTPDMMEEMYKKAHAAIRENPVYEKKPKKEVKKKRWNRPKMSLAQKKDRVAQKKASFLRAQERAAES</sequence>
<name>RL5_BOVIN</name>
<gene>
    <name type="primary">RPL5</name>
</gene>
<proteinExistence type="evidence at transcript level"/>